<gene>
    <name evidence="1" type="primary">panC</name>
    <name type="ordered locus">USA300HOU_2592</name>
</gene>
<sequence length="283" mass="31462">MTKLITTVKEMQHIVKAAKRSGTTIGFIPTMGALHDGHLTMVRESVSTNDITIVSVFVNPLQFGPNEDFDAYPRQIDKDLELVSEVGADIVFHPAVEDMYPGELGIDVKVGPLADVLEGAKRPGHFDGVVTVVNKLFNIVMPDYAYFGKKDAQQLAIVEQMVKDFNHAVEIIGIDIVREADGLAKSSRNVYLTEQERQEAVHLSKSLLLAQALYQDGERQSKVIIDRVTEYLESHISGRIEEVAVYSYPQLVEQHEITGRIFISLAVKFSKARLIDNIIIGAE</sequence>
<proteinExistence type="inferred from homology"/>
<protein>
    <recommendedName>
        <fullName evidence="1">Pantothenate synthetase</fullName>
        <shortName evidence="1">PS</shortName>
        <ecNumber evidence="1">6.3.2.1</ecNumber>
    </recommendedName>
    <alternativeName>
        <fullName evidence="1">Pantoate--beta-alanine ligase</fullName>
    </alternativeName>
    <alternativeName>
        <fullName evidence="1">Pantoate-activating enzyme</fullName>
    </alternativeName>
</protein>
<accession>A8Z3J8</accession>
<evidence type="ECO:0000255" key="1">
    <source>
        <dbReference type="HAMAP-Rule" id="MF_00158"/>
    </source>
</evidence>
<keyword id="KW-0067">ATP-binding</keyword>
<keyword id="KW-0963">Cytoplasm</keyword>
<keyword id="KW-0436">Ligase</keyword>
<keyword id="KW-0547">Nucleotide-binding</keyword>
<keyword id="KW-0566">Pantothenate biosynthesis</keyword>
<dbReference type="EC" id="6.3.2.1" evidence="1"/>
<dbReference type="EMBL" id="CP000730">
    <property type="protein sequence ID" value="ABX30578.1"/>
    <property type="molecule type" value="Genomic_DNA"/>
</dbReference>
<dbReference type="RefSeq" id="WP_000163735.1">
    <property type="nucleotide sequence ID" value="NC_010079.1"/>
</dbReference>
<dbReference type="SMR" id="A8Z3J8"/>
<dbReference type="KEGG" id="sax:USA300HOU_2592"/>
<dbReference type="HOGENOM" id="CLU_047148_0_0_9"/>
<dbReference type="UniPathway" id="UPA00028">
    <property type="reaction ID" value="UER00005"/>
</dbReference>
<dbReference type="GO" id="GO:0005829">
    <property type="term" value="C:cytosol"/>
    <property type="evidence" value="ECO:0007669"/>
    <property type="project" value="TreeGrafter"/>
</dbReference>
<dbReference type="GO" id="GO:0005524">
    <property type="term" value="F:ATP binding"/>
    <property type="evidence" value="ECO:0007669"/>
    <property type="project" value="UniProtKB-KW"/>
</dbReference>
<dbReference type="GO" id="GO:0004592">
    <property type="term" value="F:pantoate-beta-alanine ligase activity"/>
    <property type="evidence" value="ECO:0007669"/>
    <property type="project" value="UniProtKB-UniRule"/>
</dbReference>
<dbReference type="GO" id="GO:0015940">
    <property type="term" value="P:pantothenate biosynthetic process"/>
    <property type="evidence" value="ECO:0007669"/>
    <property type="project" value="UniProtKB-UniRule"/>
</dbReference>
<dbReference type="CDD" id="cd00560">
    <property type="entry name" value="PanC"/>
    <property type="match status" value="1"/>
</dbReference>
<dbReference type="FunFam" id="3.30.1300.10:FF:000001">
    <property type="entry name" value="Pantothenate synthetase"/>
    <property type="match status" value="1"/>
</dbReference>
<dbReference type="FunFam" id="3.40.50.620:FF:000013">
    <property type="entry name" value="Pantothenate synthetase"/>
    <property type="match status" value="1"/>
</dbReference>
<dbReference type="Gene3D" id="3.40.50.620">
    <property type="entry name" value="HUPs"/>
    <property type="match status" value="1"/>
</dbReference>
<dbReference type="Gene3D" id="3.30.1300.10">
    <property type="entry name" value="Pantoate-beta-alanine ligase, C-terminal domain"/>
    <property type="match status" value="1"/>
</dbReference>
<dbReference type="HAMAP" id="MF_00158">
    <property type="entry name" value="PanC"/>
    <property type="match status" value="1"/>
</dbReference>
<dbReference type="InterPro" id="IPR003721">
    <property type="entry name" value="Pantoate_ligase"/>
</dbReference>
<dbReference type="InterPro" id="IPR042176">
    <property type="entry name" value="Pantoate_ligase_C"/>
</dbReference>
<dbReference type="InterPro" id="IPR014729">
    <property type="entry name" value="Rossmann-like_a/b/a_fold"/>
</dbReference>
<dbReference type="NCBIfam" id="TIGR00018">
    <property type="entry name" value="panC"/>
    <property type="match status" value="1"/>
</dbReference>
<dbReference type="PANTHER" id="PTHR21299">
    <property type="entry name" value="CYTIDYLATE KINASE/PANTOATE-BETA-ALANINE LIGASE"/>
    <property type="match status" value="1"/>
</dbReference>
<dbReference type="PANTHER" id="PTHR21299:SF1">
    <property type="entry name" value="PANTOATE--BETA-ALANINE LIGASE"/>
    <property type="match status" value="1"/>
</dbReference>
<dbReference type="Pfam" id="PF02569">
    <property type="entry name" value="Pantoate_ligase"/>
    <property type="match status" value="1"/>
</dbReference>
<dbReference type="SUPFAM" id="SSF52374">
    <property type="entry name" value="Nucleotidylyl transferase"/>
    <property type="match status" value="1"/>
</dbReference>
<name>PANC_STAAT</name>
<feature type="chain" id="PRO_1000076871" description="Pantothenate synthetase">
    <location>
        <begin position="1"/>
        <end position="283"/>
    </location>
</feature>
<feature type="active site" description="Proton donor" evidence="1">
    <location>
        <position position="38"/>
    </location>
</feature>
<feature type="binding site" evidence="1">
    <location>
        <begin position="31"/>
        <end position="38"/>
    </location>
    <ligand>
        <name>ATP</name>
        <dbReference type="ChEBI" id="CHEBI:30616"/>
    </ligand>
</feature>
<feature type="binding site" evidence="1">
    <location>
        <position position="62"/>
    </location>
    <ligand>
        <name>(R)-pantoate</name>
        <dbReference type="ChEBI" id="CHEBI:15980"/>
    </ligand>
</feature>
<feature type="binding site" evidence="1">
    <location>
        <position position="62"/>
    </location>
    <ligand>
        <name>beta-alanine</name>
        <dbReference type="ChEBI" id="CHEBI:57966"/>
    </ligand>
</feature>
<feature type="binding site" evidence="1">
    <location>
        <begin position="148"/>
        <end position="151"/>
    </location>
    <ligand>
        <name>ATP</name>
        <dbReference type="ChEBI" id="CHEBI:30616"/>
    </ligand>
</feature>
<feature type="binding site" evidence="1">
    <location>
        <position position="154"/>
    </location>
    <ligand>
        <name>(R)-pantoate</name>
        <dbReference type="ChEBI" id="CHEBI:15980"/>
    </ligand>
</feature>
<feature type="binding site" evidence="1">
    <location>
        <position position="177"/>
    </location>
    <ligand>
        <name>ATP</name>
        <dbReference type="ChEBI" id="CHEBI:30616"/>
    </ligand>
</feature>
<feature type="binding site" evidence="1">
    <location>
        <begin position="185"/>
        <end position="188"/>
    </location>
    <ligand>
        <name>ATP</name>
        <dbReference type="ChEBI" id="CHEBI:30616"/>
    </ligand>
</feature>
<organism>
    <name type="scientific">Staphylococcus aureus (strain USA300 / TCH1516)</name>
    <dbReference type="NCBI Taxonomy" id="451516"/>
    <lineage>
        <taxon>Bacteria</taxon>
        <taxon>Bacillati</taxon>
        <taxon>Bacillota</taxon>
        <taxon>Bacilli</taxon>
        <taxon>Bacillales</taxon>
        <taxon>Staphylococcaceae</taxon>
        <taxon>Staphylococcus</taxon>
    </lineage>
</organism>
<comment type="function">
    <text evidence="1">Catalyzes the condensation of pantoate with beta-alanine in an ATP-dependent reaction via a pantoyl-adenylate intermediate.</text>
</comment>
<comment type="catalytic activity">
    <reaction evidence="1">
        <text>(R)-pantoate + beta-alanine + ATP = (R)-pantothenate + AMP + diphosphate + H(+)</text>
        <dbReference type="Rhea" id="RHEA:10912"/>
        <dbReference type="ChEBI" id="CHEBI:15378"/>
        <dbReference type="ChEBI" id="CHEBI:15980"/>
        <dbReference type="ChEBI" id="CHEBI:29032"/>
        <dbReference type="ChEBI" id="CHEBI:30616"/>
        <dbReference type="ChEBI" id="CHEBI:33019"/>
        <dbReference type="ChEBI" id="CHEBI:57966"/>
        <dbReference type="ChEBI" id="CHEBI:456215"/>
        <dbReference type="EC" id="6.3.2.1"/>
    </reaction>
</comment>
<comment type="pathway">
    <text evidence="1">Cofactor biosynthesis; (R)-pantothenate biosynthesis; (R)-pantothenate from (R)-pantoate and beta-alanine: step 1/1.</text>
</comment>
<comment type="subunit">
    <text evidence="1">Homodimer.</text>
</comment>
<comment type="subcellular location">
    <subcellularLocation>
        <location evidence="1">Cytoplasm</location>
    </subcellularLocation>
</comment>
<comment type="miscellaneous">
    <text evidence="1">The reaction proceeds by a bi uni uni bi ping pong mechanism.</text>
</comment>
<comment type="similarity">
    <text evidence="1">Belongs to the pantothenate synthetase family.</text>
</comment>
<reference key="1">
    <citation type="journal article" date="2007" name="BMC Microbiol.">
        <title>Subtle genetic changes enhance virulence of methicillin resistant and sensitive Staphylococcus aureus.</title>
        <authorList>
            <person name="Highlander S.K."/>
            <person name="Hulten K.G."/>
            <person name="Qin X."/>
            <person name="Jiang H."/>
            <person name="Yerrapragada S."/>
            <person name="Mason E.O. Jr."/>
            <person name="Shang Y."/>
            <person name="Williams T.M."/>
            <person name="Fortunov R.M."/>
            <person name="Liu Y."/>
            <person name="Igboeli O."/>
            <person name="Petrosino J."/>
            <person name="Tirumalai M."/>
            <person name="Uzman A."/>
            <person name="Fox G.E."/>
            <person name="Cardenas A.M."/>
            <person name="Muzny D.M."/>
            <person name="Hemphill L."/>
            <person name="Ding Y."/>
            <person name="Dugan S."/>
            <person name="Blyth P.R."/>
            <person name="Buhay C.J."/>
            <person name="Dinh H.H."/>
            <person name="Hawes A.C."/>
            <person name="Holder M."/>
            <person name="Kovar C.L."/>
            <person name="Lee S.L."/>
            <person name="Liu W."/>
            <person name="Nazareth L.V."/>
            <person name="Wang Q."/>
            <person name="Zhou J."/>
            <person name="Kaplan S.L."/>
            <person name="Weinstock G.M."/>
        </authorList>
    </citation>
    <scope>NUCLEOTIDE SEQUENCE [LARGE SCALE GENOMIC DNA]</scope>
    <source>
        <strain>USA300 / TCH1516</strain>
    </source>
</reference>